<reference key="1">
    <citation type="journal article" date="2000" name="J. Biotechnol.">
        <title>Hydantoin racemase from Arthrobacter aurescens DSM 3747: heterologous expression, purification and characterization.</title>
        <authorList>
            <person name="Wiese A."/>
            <person name="Pietzsch M."/>
            <person name="Syldatk C."/>
            <person name="Mattes R."/>
            <person name="Altenbuchner J."/>
        </authorList>
    </citation>
    <scope>NUCLEOTIDE SEQUENCE [GENOMIC DNA]</scope>
    <scope>FUNCTION</scope>
    <scope>CATALYTIC ACTIVITY</scope>
    <scope>BIOPHYSICOCHEMICAL PROPERTIES</scope>
    <scope>ACTIVITY REGULATION</scope>
    <scope>MASS SPECTROMETRY</scope>
    <scope>SUBSTRATE SPECIFICITY</scope>
    <scope>SUBUNIT</scope>
    <source>
        <strain>DSM 3747</strain>
    </source>
</reference>
<sequence>MRILVINPNSSSALTESVADAAQQVVATGTIISAINPSRGPAVIEGSFDEALATFHLIEEVERAERENPPDAYVIACFGDPGLDAVKELTDRPVVGVAEAAIHMSSFVAATFSIVSILPRVRKHLHELVRQAGATNRLASIKLPNLGVMAFHEDEHAALETLKQAAKEAVQEDGAESIVLGCAGMVGFARQLSDELGVPVIDPVEAACRVAESLVALGYQTSKANSYQKPTEKQYL</sequence>
<comment type="function">
    <text evidence="2">Involved in the asymmetric conversion of racemic 5-substituted hydantoins to the corresponding L-amino acids. Catalyzes the racemization via enolization of D- and L-5-monosubstituted hydantoins. It shows preference for hydantoins with arylalkyl side chains such as 5-benzylhydantoin (BH) and, to a lesser extent, 5-(3-indolylmethylene)hydantoin (IMH).</text>
</comment>
<comment type="catalytic activity">
    <reaction evidence="2">
        <text>a D-5-monosubstituted hydantoin = a L-5-monosubstituted hydantoin</text>
        <dbReference type="Rhea" id="RHEA:46624"/>
        <dbReference type="ChEBI" id="CHEBI:86339"/>
        <dbReference type="ChEBI" id="CHEBI:86340"/>
        <dbReference type="EC" id="5.1.99.5"/>
    </reaction>
</comment>
<comment type="catalytic activity">
    <reaction evidence="2">
        <text>D-5-benzylhydantoin = L-5-benzylhydantoin</text>
        <dbReference type="Rhea" id="RHEA:83991"/>
        <dbReference type="ChEBI" id="CHEBI:176864"/>
        <dbReference type="ChEBI" id="CHEBI:233540"/>
    </reaction>
</comment>
<comment type="activity regulation">
    <text evidence="2">Completely inhibited by HgCl(2) and iodoacetamide. Stimulated by dithiothreitol.</text>
</comment>
<comment type="biophysicochemical properties">
    <phDependence>
        <text evidence="2">Optimum pH is 8.5.</text>
    </phDependence>
    <temperatureDependence>
        <text evidence="2">Optimum temperature is 55 degrees Celsius.</text>
    </temperatureDependence>
</comment>
<comment type="subunit">
    <text evidence="2">Homohexamer, homoheptamer or homooctamer.</text>
</comment>
<comment type="mass spectrometry"/>
<comment type="similarity">
    <text evidence="4">Belongs to the HyuE racemase family.</text>
</comment>
<keyword id="KW-0028">Amino-acid biosynthesis</keyword>
<keyword id="KW-0175">Coiled coil</keyword>
<keyword id="KW-0413">Isomerase</keyword>
<proteinExistence type="evidence at protein level"/>
<dbReference type="EC" id="5.1.99.5" evidence="2"/>
<dbReference type="EMBL" id="AF146701">
    <property type="protein sequence ID" value="AAG02129.1"/>
    <property type="molecule type" value="Genomic_DNA"/>
</dbReference>
<dbReference type="SMR" id="Q9F466"/>
<dbReference type="BioCyc" id="MetaCyc:MONOMER-13960"/>
<dbReference type="GO" id="GO:0047661">
    <property type="term" value="F:amino-acid racemase activity"/>
    <property type="evidence" value="ECO:0007669"/>
    <property type="project" value="InterPro"/>
</dbReference>
<dbReference type="GO" id="GO:0036348">
    <property type="term" value="F:hydantoin racemase activity"/>
    <property type="evidence" value="ECO:0000250"/>
    <property type="project" value="UniProtKB"/>
</dbReference>
<dbReference type="GO" id="GO:0008652">
    <property type="term" value="P:amino acid biosynthetic process"/>
    <property type="evidence" value="ECO:0007669"/>
    <property type="project" value="UniProtKB-KW"/>
</dbReference>
<dbReference type="FunFam" id="3.40.50.12500:FF:000001">
    <property type="entry name" value="Putative hydantoin racemase"/>
    <property type="match status" value="1"/>
</dbReference>
<dbReference type="Gene3D" id="3.40.50.12500">
    <property type="match status" value="1"/>
</dbReference>
<dbReference type="InterPro" id="IPR015942">
    <property type="entry name" value="Asp/Glu/hydantoin_racemase"/>
</dbReference>
<dbReference type="InterPro" id="IPR052186">
    <property type="entry name" value="Hydantoin_racemase-like"/>
</dbReference>
<dbReference type="InterPro" id="IPR053714">
    <property type="entry name" value="Iso_Racemase_Enz_sf"/>
</dbReference>
<dbReference type="PANTHER" id="PTHR28047">
    <property type="entry name" value="PROTEIN DCG1"/>
    <property type="match status" value="1"/>
</dbReference>
<dbReference type="PANTHER" id="PTHR28047:SF5">
    <property type="entry name" value="PROTEIN DCG1"/>
    <property type="match status" value="1"/>
</dbReference>
<dbReference type="Pfam" id="PF01177">
    <property type="entry name" value="Asp_Glu_race"/>
    <property type="match status" value="1"/>
</dbReference>
<protein>
    <recommendedName>
        <fullName evidence="3">Hydantoin racemase</fullName>
        <ecNumber evidence="2">5.1.99.5</ecNumber>
    </recommendedName>
</protein>
<feature type="chain" id="PRO_0000439847" description="Hydantoin racemase">
    <location>
        <begin position="1"/>
        <end position="236"/>
    </location>
</feature>
<feature type="site" description="Seems to be responsible for recognition and proton retrieval of D-isomers" evidence="1">
    <location>
        <position position="77"/>
    </location>
</feature>
<feature type="site" description="Seems to be responsible for L-isomers recognition and racemization" evidence="1">
    <location>
        <position position="182"/>
    </location>
</feature>
<gene>
    <name evidence="3" type="primary">hyuA</name>
</gene>
<evidence type="ECO:0000250" key="1">
    <source>
        <dbReference type="UniProtKB" id="Q6TMG4"/>
    </source>
</evidence>
<evidence type="ECO:0000269" key="2">
    <source>
    </source>
</evidence>
<evidence type="ECO:0000303" key="3">
    <source>
    </source>
</evidence>
<evidence type="ECO:0000305" key="4"/>
<organism>
    <name type="scientific">Paenarthrobacter aurescens</name>
    <name type="common">Arthrobacter aurescens</name>
    <dbReference type="NCBI Taxonomy" id="43663"/>
    <lineage>
        <taxon>Bacteria</taxon>
        <taxon>Bacillati</taxon>
        <taxon>Actinomycetota</taxon>
        <taxon>Actinomycetes</taxon>
        <taxon>Micrococcales</taxon>
        <taxon>Micrococcaceae</taxon>
        <taxon>Paenarthrobacter</taxon>
    </lineage>
</organism>
<accession>Q9F466</accession>
<name>HYDRA_PAEAU</name>